<evidence type="ECO:0000250" key="1">
    <source>
        <dbReference type="UniProtKB" id="Q01524"/>
    </source>
</evidence>
<evidence type="ECO:0000255" key="2"/>
<evidence type="ECO:0000305" key="3"/>
<reference key="1">
    <citation type="journal article" date="2004" name="Physiol. Genomics">
        <title>Rapid evolution and diversification of mammalian alpha-defensins as revealed by comparative analysis of rodent and primate genes.</title>
        <authorList>
            <person name="Patil A."/>
            <person name="Hughes A.L."/>
            <person name="Zhang G."/>
        </authorList>
    </citation>
    <scope>NUCLEOTIDE SEQUENCE [MRNA]</scope>
</reference>
<keyword id="KW-0044">Antibiotic</keyword>
<keyword id="KW-0929">Antimicrobial</keyword>
<keyword id="KW-0968">Cytoplasmic vesicle</keyword>
<keyword id="KW-0211">Defensin</keyword>
<keyword id="KW-1015">Disulfide bond</keyword>
<keyword id="KW-0295">Fungicide</keyword>
<keyword id="KW-0391">Immunity</keyword>
<keyword id="KW-0399">Innate immunity</keyword>
<keyword id="KW-1185">Reference proteome</keyword>
<keyword id="KW-0964">Secreted</keyword>
<keyword id="KW-0732">Signal</keyword>
<gene>
    <name type="primary">DEFA6</name>
</gene>
<comment type="function">
    <text evidence="1">Host-defense peptide that contributes to intestinal innate immunity and mediates homeostasis at mucosal surfaces by forming higher-order oligomers that capture bacteria and prevent microbial invasion of the epithelium (By similarity). After binding to bacterial surface proteins, undergoes ordered self-assembly to form fibril-like nanonets that surround and entangle bacteria and thereby prevent bacterial invasion across the epithelial barrier (By similarity). Entangles and agglutinates Gram-negative bacteria, such as E.coli, S.typhimurium and Y.enterocolitica, and Gram-positive bacteria such as L.monocytogenes, thereby protecting the intestine against invasion by enteric bacterial pathogens (By similarity). Blocks adhesion of C.albicans to intestinal epithelial cells and thereby suppresses fungal invasion of epithelial cells and biofilm formation (By similarity). Under reducing conditions and in an acidic environment similar to the intestinal milieu, exhibits inhibitory activity against anaerobic bacteria such as B.adolescentis, L.acidophilus, and B.breve, as well as B.longum and S.thermophilus, possibly by leading to alterations in bacterial cell envelope structures (By similarity). The disulfide-linked oxidized form exhibits negligible antimicrobial activity against Gram-negative and Gram-positive bacteria, as compared to the enteric defensin DEFA5 (By similarity).</text>
</comment>
<comment type="subunit">
    <text evidence="1">Homodimer (By similarity). Self-assembles into higher-order oligomers termed nanonets, fibril-like structures that entrap microbes (By similarity). Self-assembly into nanonets seems to protect against proteolytic digestion in duodenal fluid (By similarity). Interacts with Y.enterocolitica invasin and S.typhimurium fliC/flagellim; the interaction creates an anchoring site for progressive DEFA6 self-assembly into nanonets (By similarity).</text>
</comment>
<comment type="subcellular location">
    <subcellularLocation>
        <location evidence="1">Secreted</location>
    </subcellularLocation>
    <subcellularLocation>
        <location evidence="1">Cytoplasmic vesicle</location>
        <location evidence="1">Secretory vesicle</location>
    </subcellularLocation>
    <text evidence="1">Stored as propeptide in secretory granules of small intestinal Paneth cells and found in the ileum lumen as mature peptide.</text>
</comment>
<comment type="PTM">
    <text evidence="1">Proteolytically cleaved by trypsin at Arg-68; the propeptide is stored in the tissue of the small intestine and the mature peptide is found in the luminal fluid; cleavage may occur during or after release into the lumen (By similarity). The N-terminal propeptide region suppresses self-assembly and renders DEFA6 propeptide unable to agglutinate bacteria and protect human epithelial cells from bacterial invasion (By similarity).</text>
</comment>
<comment type="PTM">
    <text evidence="1">Under reducing conditions, naturally present in the gut owing to the low redox potential or enzymatically generated by the thioredoxin system, the disulfide bridges are opened leading to a conformational change of DEF6, thereby changing its antimicrobial spectrum (By similarity). The reduced form exhibits inhibitory activity against anaerobic bacteria, in contrast to the minimal antimicrobial activity of the disulfide-linked oxidized form (By similarity). The formation of higher-order nanonets and bacterial entrapment is independent of the redox state (By similarity).</text>
</comment>
<comment type="similarity">
    <text evidence="3">Belongs to the alpha-defensin family.</text>
</comment>
<name>DEF6_PANTR</name>
<organism>
    <name type="scientific">Pan troglodytes</name>
    <name type="common">Chimpanzee</name>
    <dbReference type="NCBI Taxonomy" id="9598"/>
    <lineage>
        <taxon>Eukaryota</taxon>
        <taxon>Metazoa</taxon>
        <taxon>Chordata</taxon>
        <taxon>Craniata</taxon>
        <taxon>Vertebrata</taxon>
        <taxon>Euteleostomi</taxon>
        <taxon>Mammalia</taxon>
        <taxon>Eutheria</taxon>
        <taxon>Euarchontoglires</taxon>
        <taxon>Primates</taxon>
        <taxon>Haplorrhini</taxon>
        <taxon>Catarrhini</taxon>
        <taxon>Hominidae</taxon>
        <taxon>Pan</taxon>
    </lineage>
</organism>
<feature type="signal peptide" evidence="2">
    <location>
        <begin position="1"/>
        <end position="19"/>
    </location>
</feature>
<feature type="propeptide" id="PRO_0000006792" evidence="1">
    <location>
        <begin position="20"/>
        <end position="68"/>
    </location>
</feature>
<feature type="peptide" id="PRO_0000006793" description="Defensin-6" evidence="1">
    <location>
        <begin position="69" status="uncertain"/>
        <end position="100"/>
    </location>
</feature>
<feature type="disulfide bond" evidence="1">
    <location>
        <begin position="72"/>
        <end position="99"/>
    </location>
</feature>
<feature type="disulfide bond" evidence="1">
    <location>
        <begin position="74"/>
        <end position="88"/>
    </location>
</feature>
<feature type="disulfide bond" evidence="1">
    <location>
        <begin position="78"/>
        <end position="98"/>
    </location>
</feature>
<dbReference type="EMBL" id="AY746440">
    <property type="protein sequence ID" value="AAW78343.1"/>
    <property type="molecule type" value="mRNA"/>
</dbReference>
<dbReference type="RefSeq" id="NP_001029079.1">
    <property type="nucleotide sequence ID" value="NM_001033907.1"/>
</dbReference>
<dbReference type="SMR" id="Q5G860"/>
<dbReference type="FunCoup" id="Q5G860">
    <property type="interactions" value="191"/>
</dbReference>
<dbReference type="STRING" id="9598.ENSPTRP00000086584"/>
<dbReference type="Ensembl" id="ENSPTRT00000089437.1">
    <property type="protein sequence ID" value="ENSPTRP00000086584.1"/>
    <property type="gene ID" value="ENSPTRG00000051516.1"/>
</dbReference>
<dbReference type="GeneID" id="619354"/>
<dbReference type="KEGG" id="ptr:619354"/>
<dbReference type="CTD" id="1671"/>
<dbReference type="VGNC" id="VGNC:50325">
    <property type="gene designation" value="DEFA6"/>
</dbReference>
<dbReference type="GeneTree" id="ENSGT00940000153268"/>
<dbReference type="InParanoid" id="Q5G860"/>
<dbReference type="OMA" id="RSFTCHC"/>
<dbReference type="OrthoDB" id="14062at9604"/>
<dbReference type="Proteomes" id="UP000002277">
    <property type="component" value="Chromosome 8"/>
</dbReference>
<dbReference type="GO" id="GO:0005615">
    <property type="term" value="C:extracellular space"/>
    <property type="evidence" value="ECO:0000318"/>
    <property type="project" value="GO_Central"/>
</dbReference>
<dbReference type="GO" id="GO:0005796">
    <property type="term" value="C:Golgi lumen"/>
    <property type="evidence" value="ECO:0007669"/>
    <property type="project" value="UniProtKB-ARBA"/>
</dbReference>
<dbReference type="GO" id="GO:0030133">
    <property type="term" value="C:transport vesicle"/>
    <property type="evidence" value="ECO:0007669"/>
    <property type="project" value="UniProtKB-SubCell"/>
</dbReference>
<dbReference type="GO" id="GO:0042803">
    <property type="term" value="F:protein homodimerization activity"/>
    <property type="evidence" value="ECO:0007669"/>
    <property type="project" value="Ensembl"/>
</dbReference>
<dbReference type="GO" id="GO:0019731">
    <property type="term" value="P:antibacterial humoral response"/>
    <property type="evidence" value="ECO:0000318"/>
    <property type="project" value="GO_Central"/>
</dbReference>
<dbReference type="GO" id="GO:0061844">
    <property type="term" value="P:antimicrobial humoral immune response mediated by antimicrobial peptide"/>
    <property type="evidence" value="ECO:0000318"/>
    <property type="project" value="GO_Central"/>
</dbReference>
<dbReference type="GO" id="GO:0071222">
    <property type="term" value="P:cellular response to lipopolysaccharide"/>
    <property type="evidence" value="ECO:0000318"/>
    <property type="project" value="GO_Central"/>
</dbReference>
<dbReference type="GO" id="GO:0050832">
    <property type="term" value="P:defense response to fungus"/>
    <property type="evidence" value="ECO:0007669"/>
    <property type="project" value="UniProtKB-KW"/>
</dbReference>
<dbReference type="GO" id="GO:0050829">
    <property type="term" value="P:defense response to Gram-negative bacterium"/>
    <property type="evidence" value="ECO:0000318"/>
    <property type="project" value="GO_Central"/>
</dbReference>
<dbReference type="GO" id="GO:0050830">
    <property type="term" value="P:defense response to Gram-positive bacterium"/>
    <property type="evidence" value="ECO:0000318"/>
    <property type="project" value="GO_Central"/>
</dbReference>
<dbReference type="GO" id="GO:0051673">
    <property type="term" value="P:disruption of plasma membrane integrity in another organism"/>
    <property type="evidence" value="ECO:0000318"/>
    <property type="project" value="GO_Central"/>
</dbReference>
<dbReference type="GO" id="GO:0002227">
    <property type="term" value="P:innate immune response in mucosa"/>
    <property type="evidence" value="ECO:0000318"/>
    <property type="project" value="GO_Central"/>
</dbReference>
<dbReference type="GO" id="GO:0031640">
    <property type="term" value="P:killing of cells of another organism"/>
    <property type="evidence" value="ECO:0007669"/>
    <property type="project" value="UniProtKB-KW"/>
</dbReference>
<dbReference type="InterPro" id="IPR016327">
    <property type="entry name" value="Alpha-defensin"/>
</dbReference>
<dbReference type="InterPro" id="IPR006081">
    <property type="entry name" value="Alpha-defensin_C"/>
</dbReference>
<dbReference type="InterPro" id="IPR002366">
    <property type="entry name" value="Alpha-defensin_N"/>
</dbReference>
<dbReference type="InterPro" id="IPR006080">
    <property type="entry name" value="Beta/alpha-defensin_C"/>
</dbReference>
<dbReference type="PANTHER" id="PTHR11876">
    <property type="entry name" value="ALPHA-DEFENSIN 1"/>
    <property type="match status" value="1"/>
</dbReference>
<dbReference type="PANTHER" id="PTHR11876:SF3">
    <property type="entry name" value="DEFENSIN-6"/>
    <property type="match status" value="1"/>
</dbReference>
<dbReference type="Pfam" id="PF00323">
    <property type="entry name" value="Defensin_1"/>
    <property type="match status" value="1"/>
</dbReference>
<dbReference type="Pfam" id="PF00879">
    <property type="entry name" value="Defensin_propep"/>
    <property type="match status" value="1"/>
</dbReference>
<dbReference type="PIRSF" id="PIRSF001875">
    <property type="entry name" value="Alpha-defensin"/>
    <property type="match status" value="1"/>
</dbReference>
<dbReference type="SMART" id="SM01418">
    <property type="entry name" value="Defensin_propep"/>
    <property type="match status" value="1"/>
</dbReference>
<dbReference type="SMART" id="SM00048">
    <property type="entry name" value="DEFSN"/>
    <property type="match status" value="1"/>
</dbReference>
<dbReference type="PROSITE" id="PS00269">
    <property type="entry name" value="DEFENSIN"/>
    <property type="match status" value="1"/>
</dbReference>
<protein>
    <recommendedName>
        <fullName>Defensin-6</fullName>
    </recommendedName>
    <alternativeName>
        <fullName>Defensin, alpha 6</fullName>
    </alternativeName>
</protein>
<proteinExistence type="inferred from homology"/>
<accession>Q5G860</accession>
<sequence>MRTLTILTAVLLVALQAKAEPLQAEDEPLQAKAYEADAQEQRGANDQDFAVSFAEDASSSLRALGSTRAFTCHCRRSCYSTEYSYGTCTVMGINHRFCCL</sequence>